<protein>
    <recommendedName>
        <fullName evidence="1">UDP-4-amino-4-deoxy-L-arabinose--oxoglutarate aminotransferase</fullName>
        <ecNumber evidence="1">2.6.1.87</ecNumber>
    </recommendedName>
    <alternativeName>
        <fullName evidence="1">UDP-(beta-L-threo-pentapyranosyl-4''-ulose diphosphate) aminotransferase</fullName>
        <shortName evidence="1">UDP-Ara4O aminotransferase</shortName>
    </alternativeName>
    <alternativeName>
        <fullName evidence="1">UDP-4-amino-4-deoxy-L-arabinose aminotransferase</fullName>
    </alternativeName>
</protein>
<comment type="function">
    <text evidence="1">Catalyzes the conversion of UDP-4-keto-arabinose (UDP-Ara4O) to UDP-4-amino-4-deoxy-L-arabinose (UDP-L-Ara4N). The modified arabinose is attached to lipid A and is required for resistance to polymyxin and cationic antimicrobial peptides.</text>
</comment>
<comment type="catalytic activity">
    <reaction evidence="1">
        <text>UDP-4-amino-4-deoxy-beta-L-arabinose + 2-oxoglutarate = UDP-beta-L-threo-pentopyranos-4-ulose + L-glutamate</text>
        <dbReference type="Rhea" id="RHEA:24710"/>
        <dbReference type="ChEBI" id="CHEBI:16810"/>
        <dbReference type="ChEBI" id="CHEBI:29985"/>
        <dbReference type="ChEBI" id="CHEBI:58708"/>
        <dbReference type="ChEBI" id="CHEBI:58710"/>
        <dbReference type="EC" id="2.6.1.87"/>
    </reaction>
</comment>
<comment type="cofactor">
    <cofactor evidence="1">
        <name>pyridoxal 5'-phosphate</name>
        <dbReference type="ChEBI" id="CHEBI:597326"/>
    </cofactor>
</comment>
<comment type="pathway">
    <text evidence="1">Nucleotide-sugar biosynthesis; UDP-4-deoxy-4-formamido-beta-L-arabinose biosynthesis; UDP-4-deoxy-4-formamido-beta-L-arabinose from UDP-alpha-D-glucuronate: step 2/3.</text>
</comment>
<comment type="pathway">
    <text evidence="1">Bacterial outer membrane biogenesis; lipopolysaccharide biosynthesis.</text>
</comment>
<comment type="subunit">
    <text evidence="1">Homodimer.</text>
</comment>
<comment type="similarity">
    <text evidence="1">Belongs to the DegT/DnrJ/EryC1 family. ArnB subfamily.</text>
</comment>
<accession>A8A2C0</accession>
<sequence>MSEFLPFSRPAMGVEELAAVKEVLESGWITTGPKNQALEQAFCQLTGNQHAIAVSSATAGMHITLMALKIGKGDEVITPSLTWVSTLNMISLLGATPVMVDVDRDTLMVTPEAIESAITPRTKAIIPVHYAGAPADIDAIRAIGERYGIAVIEDAAHAVGTYYKGRHIGAKGTAIFSFHAIKNITCAEGGLIVTDNENLARQLRMLKFHGLGVDAYDRQTWGRAPQAEVLTPGYKYNLTDINAAIALTQLVKLEHLNTRRREIAQQYQQALAALPFQPLSLPAWPHVHAWHLFIIRVDEQRCGISRDALMEALKERGIGTGLHFRAAHTQKYYRERFPTLSLPNTEWNSERICSLPLFPDMTTADADHVITALQQLAGQ</sequence>
<dbReference type="EC" id="2.6.1.87" evidence="1"/>
<dbReference type="EMBL" id="CP000802">
    <property type="protein sequence ID" value="ABV06674.1"/>
    <property type="molecule type" value="Genomic_DNA"/>
</dbReference>
<dbReference type="RefSeq" id="WP_001295286.1">
    <property type="nucleotide sequence ID" value="NC_009800.1"/>
</dbReference>
<dbReference type="SMR" id="A8A2C0"/>
<dbReference type="KEGG" id="ecx:EcHS_A2398"/>
<dbReference type="HOGENOM" id="CLU_033332_0_3_6"/>
<dbReference type="UniPathway" id="UPA00030"/>
<dbReference type="UniPathway" id="UPA00032">
    <property type="reaction ID" value="UER00493"/>
</dbReference>
<dbReference type="GO" id="GO:0016020">
    <property type="term" value="C:membrane"/>
    <property type="evidence" value="ECO:0007669"/>
    <property type="project" value="GOC"/>
</dbReference>
<dbReference type="GO" id="GO:0030170">
    <property type="term" value="F:pyridoxal phosphate binding"/>
    <property type="evidence" value="ECO:0007669"/>
    <property type="project" value="TreeGrafter"/>
</dbReference>
<dbReference type="GO" id="GO:0099620">
    <property type="term" value="F:UDP-4-amino-4-deoxy-L-arabinose aminotransferase"/>
    <property type="evidence" value="ECO:0007669"/>
    <property type="project" value="UniProtKB-EC"/>
</dbReference>
<dbReference type="GO" id="GO:0009245">
    <property type="term" value="P:lipid A biosynthetic process"/>
    <property type="evidence" value="ECO:0007669"/>
    <property type="project" value="UniProtKB-KW"/>
</dbReference>
<dbReference type="GO" id="GO:0009103">
    <property type="term" value="P:lipopolysaccharide biosynthetic process"/>
    <property type="evidence" value="ECO:0007669"/>
    <property type="project" value="UniProtKB-UniRule"/>
</dbReference>
<dbReference type="GO" id="GO:0046677">
    <property type="term" value="P:response to antibiotic"/>
    <property type="evidence" value="ECO:0007669"/>
    <property type="project" value="UniProtKB-KW"/>
</dbReference>
<dbReference type="CDD" id="cd00616">
    <property type="entry name" value="AHBA_syn"/>
    <property type="match status" value="1"/>
</dbReference>
<dbReference type="FunFam" id="3.40.640.10:FF:000040">
    <property type="entry name" value="UDP-4-amino-4-deoxy-L-arabinose--oxoglutarate aminotransferase"/>
    <property type="match status" value="1"/>
</dbReference>
<dbReference type="FunFam" id="3.90.1150.10:FF:000030">
    <property type="entry name" value="UDP-4-amino-4-deoxy-L-arabinose--oxoglutarate aminotransferase"/>
    <property type="match status" value="1"/>
</dbReference>
<dbReference type="Gene3D" id="3.90.1150.10">
    <property type="entry name" value="Aspartate Aminotransferase, domain 1"/>
    <property type="match status" value="1"/>
</dbReference>
<dbReference type="Gene3D" id="3.40.640.10">
    <property type="entry name" value="Type I PLP-dependent aspartate aminotransferase-like (Major domain)"/>
    <property type="match status" value="1"/>
</dbReference>
<dbReference type="HAMAP" id="MF_01167">
    <property type="entry name" value="ArnB_transfer"/>
    <property type="match status" value="1"/>
</dbReference>
<dbReference type="InterPro" id="IPR022850">
    <property type="entry name" value="ArnB_NH2Trfase"/>
</dbReference>
<dbReference type="InterPro" id="IPR000653">
    <property type="entry name" value="DegT/StrS_aminotransferase"/>
</dbReference>
<dbReference type="InterPro" id="IPR015424">
    <property type="entry name" value="PyrdxlP-dep_Trfase"/>
</dbReference>
<dbReference type="InterPro" id="IPR015421">
    <property type="entry name" value="PyrdxlP-dep_Trfase_major"/>
</dbReference>
<dbReference type="InterPro" id="IPR015422">
    <property type="entry name" value="PyrdxlP-dep_Trfase_small"/>
</dbReference>
<dbReference type="NCBIfam" id="NF008658">
    <property type="entry name" value="PRK11658.1"/>
    <property type="match status" value="1"/>
</dbReference>
<dbReference type="PANTHER" id="PTHR30244">
    <property type="entry name" value="TRANSAMINASE"/>
    <property type="match status" value="1"/>
</dbReference>
<dbReference type="PANTHER" id="PTHR30244:SF41">
    <property type="entry name" value="UDP-4-AMINO-4-DEOXY-L-ARABINOSE--OXOGLUTARATE AMINOTRANSFERASE"/>
    <property type="match status" value="1"/>
</dbReference>
<dbReference type="Pfam" id="PF01041">
    <property type="entry name" value="DegT_DnrJ_EryC1"/>
    <property type="match status" value="1"/>
</dbReference>
<dbReference type="PIRSF" id="PIRSF000390">
    <property type="entry name" value="PLP_StrS"/>
    <property type="match status" value="1"/>
</dbReference>
<dbReference type="SUPFAM" id="SSF53383">
    <property type="entry name" value="PLP-dependent transferases"/>
    <property type="match status" value="1"/>
</dbReference>
<evidence type="ECO:0000255" key="1">
    <source>
        <dbReference type="HAMAP-Rule" id="MF_01167"/>
    </source>
</evidence>
<feature type="chain" id="PRO_1000065683" description="UDP-4-amino-4-deoxy-L-arabinose--oxoglutarate aminotransferase">
    <location>
        <begin position="1"/>
        <end position="379"/>
    </location>
</feature>
<feature type="modified residue" description="N6-(pyridoxal phosphate)lysine" evidence="1">
    <location>
        <position position="182"/>
    </location>
</feature>
<proteinExistence type="inferred from homology"/>
<keyword id="KW-0032">Aminotransferase</keyword>
<keyword id="KW-0046">Antibiotic resistance</keyword>
<keyword id="KW-0441">Lipid A biosynthesis</keyword>
<keyword id="KW-0444">Lipid biosynthesis</keyword>
<keyword id="KW-0443">Lipid metabolism</keyword>
<keyword id="KW-0448">Lipopolysaccharide biosynthesis</keyword>
<keyword id="KW-0663">Pyridoxal phosphate</keyword>
<keyword id="KW-0808">Transferase</keyword>
<gene>
    <name evidence="1" type="primary">arnB</name>
    <name type="ordered locus">EcHS_A2398</name>
</gene>
<reference key="1">
    <citation type="journal article" date="2008" name="J. Bacteriol.">
        <title>The pangenome structure of Escherichia coli: comparative genomic analysis of E. coli commensal and pathogenic isolates.</title>
        <authorList>
            <person name="Rasko D.A."/>
            <person name="Rosovitz M.J."/>
            <person name="Myers G.S.A."/>
            <person name="Mongodin E.F."/>
            <person name="Fricke W.F."/>
            <person name="Gajer P."/>
            <person name="Crabtree J."/>
            <person name="Sebaihia M."/>
            <person name="Thomson N.R."/>
            <person name="Chaudhuri R."/>
            <person name="Henderson I.R."/>
            <person name="Sperandio V."/>
            <person name="Ravel J."/>
        </authorList>
    </citation>
    <scope>NUCLEOTIDE SEQUENCE [LARGE SCALE GENOMIC DNA]</scope>
    <source>
        <strain>HS</strain>
    </source>
</reference>
<name>ARNB_ECOHS</name>
<organism>
    <name type="scientific">Escherichia coli O9:H4 (strain HS)</name>
    <dbReference type="NCBI Taxonomy" id="331112"/>
    <lineage>
        <taxon>Bacteria</taxon>
        <taxon>Pseudomonadati</taxon>
        <taxon>Pseudomonadota</taxon>
        <taxon>Gammaproteobacteria</taxon>
        <taxon>Enterobacterales</taxon>
        <taxon>Enterobacteriaceae</taxon>
        <taxon>Escherichia</taxon>
    </lineage>
</organism>